<evidence type="ECO:0000250" key="1">
    <source>
        <dbReference type="UniProtKB" id="O70480"/>
    </source>
</evidence>
<evidence type="ECO:0000255" key="2"/>
<evidence type="ECO:0000255" key="3">
    <source>
        <dbReference type="PROSITE-ProRule" id="PRU00290"/>
    </source>
</evidence>
<evidence type="ECO:0000256" key="4">
    <source>
        <dbReference type="SAM" id="MobiDB-lite"/>
    </source>
</evidence>
<evidence type="ECO:0000269" key="5">
    <source>
    </source>
</evidence>
<evidence type="ECO:0000303" key="6">
    <source>
    </source>
</evidence>
<evidence type="ECO:0000305" key="7"/>
<evidence type="ECO:0007744" key="8">
    <source>
    </source>
</evidence>
<evidence type="ECO:0007744" key="9">
    <source>
    </source>
</evidence>
<evidence type="ECO:0007744" key="10">
    <source>
    </source>
</evidence>
<evidence type="ECO:0007744" key="11">
    <source>
    </source>
</evidence>
<evidence type="ECO:0007744" key="12">
    <source>
    </source>
</evidence>
<evidence type="ECO:0007744" key="13">
    <source>
    </source>
</evidence>
<evidence type="ECO:0007744" key="14">
    <source>
    </source>
</evidence>
<evidence type="ECO:0007744" key="15">
    <source>
    </source>
</evidence>
<gene>
    <name type="primary">VAMP4</name>
</gene>
<protein>
    <recommendedName>
        <fullName>Vesicle-associated membrane protein 4</fullName>
        <shortName>VAMP-4</shortName>
    </recommendedName>
</protein>
<keyword id="KW-0025">Alternative splicing</keyword>
<keyword id="KW-0175">Coiled coil</keyword>
<keyword id="KW-0333">Golgi apparatus</keyword>
<keyword id="KW-0472">Membrane</keyword>
<keyword id="KW-0597">Phosphoprotein</keyword>
<keyword id="KW-1267">Proteomics identification</keyword>
<keyword id="KW-1185">Reference proteome</keyword>
<keyword id="KW-0812">Transmembrane</keyword>
<keyword id="KW-1133">Transmembrane helix</keyword>
<dbReference type="EMBL" id="AF044310">
    <property type="protein sequence ID" value="AAC24032.1"/>
    <property type="molecule type" value="mRNA"/>
</dbReference>
<dbReference type="EMBL" id="AL035296">
    <property type="protein sequence ID" value="CAA22896.1"/>
    <property type="molecule type" value="mRNA"/>
</dbReference>
<dbReference type="EMBL" id="Z98751">
    <property type="status" value="NOT_ANNOTATED_CDS"/>
    <property type="molecule type" value="Genomic_DNA"/>
</dbReference>
<dbReference type="EMBL" id="CH471067">
    <property type="protein sequence ID" value="EAW90904.1"/>
    <property type="molecule type" value="Genomic_DNA"/>
</dbReference>
<dbReference type="EMBL" id="BC005974">
    <property type="protein sequence ID" value="AAH05974.1"/>
    <property type="molecule type" value="mRNA"/>
</dbReference>
<dbReference type="EMBL" id="BC007019">
    <property type="protein sequence ID" value="AAH07019.1"/>
    <property type="molecule type" value="mRNA"/>
</dbReference>
<dbReference type="EMBL" id="BC031264">
    <property type="protein sequence ID" value="AAH31264.1"/>
    <property type="molecule type" value="mRNA"/>
</dbReference>
<dbReference type="CCDS" id="CCDS1298.1">
    <molecule id="O75379-1"/>
</dbReference>
<dbReference type="CCDS" id="CCDS53430.1">
    <molecule id="O75379-2"/>
</dbReference>
<dbReference type="RefSeq" id="NP_001172056.1">
    <molecule id="O75379-2"/>
    <property type="nucleotide sequence ID" value="NM_001185127.2"/>
</dbReference>
<dbReference type="RefSeq" id="NP_003753.2">
    <molecule id="O75379-1"/>
    <property type="nucleotide sequence ID" value="NM_003762.4"/>
</dbReference>
<dbReference type="SMR" id="O75379"/>
<dbReference type="BioGRID" id="114222">
    <property type="interactions" value="146"/>
</dbReference>
<dbReference type="CORUM" id="O75379"/>
<dbReference type="DIP" id="DIP-44226N"/>
<dbReference type="FunCoup" id="O75379">
    <property type="interactions" value="1368"/>
</dbReference>
<dbReference type="IntAct" id="O75379">
    <property type="interactions" value="113"/>
</dbReference>
<dbReference type="MINT" id="O75379"/>
<dbReference type="STRING" id="9606.ENSP00000236192"/>
<dbReference type="iPTMnet" id="O75379"/>
<dbReference type="PhosphoSitePlus" id="O75379"/>
<dbReference type="SwissPalm" id="O75379"/>
<dbReference type="BioMuta" id="VAMP4"/>
<dbReference type="CPTAC" id="CPTAC-1035"/>
<dbReference type="jPOST" id="O75379"/>
<dbReference type="MassIVE" id="O75379"/>
<dbReference type="PaxDb" id="9606-ENSP00000236192"/>
<dbReference type="PeptideAtlas" id="O75379"/>
<dbReference type="ProteomicsDB" id="49950">
    <molecule id="O75379-1"/>
</dbReference>
<dbReference type="ProteomicsDB" id="49951">
    <molecule id="O75379-2"/>
</dbReference>
<dbReference type="Pumba" id="O75379"/>
<dbReference type="Antibodypedia" id="34381">
    <property type="antibodies" value="258 antibodies from 27 providers"/>
</dbReference>
<dbReference type="DNASU" id="8674"/>
<dbReference type="Ensembl" id="ENST00000236192.12">
    <molecule id="O75379-1"/>
    <property type="protein sequence ID" value="ENSP00000236192.7"/>
    <property type="gene ID" value="ENSG00000117533.15"/>
</dbReference>
<dbReference type="Ensembl" id="ENST00000367740.2">
    <molecule id="O75379-2"/>
    <property type="protein sequence ID" value="ENSP00000356714.2"/>
    <property type="gene ID" value="ENSG00000117533.15"/>
</dbReference>
<dbReference type="Ensembl" id="ENST00000474047.5">
    <molecule id="O75379-1"/>
    <property type="protein sequence ID" value="ENSP00000435933.1"/>
    <property type="gene ID" value="ENSG00000117533.15"/>
</dbReference>
<dbReference type="GeneID" id="8674"/>
<dbReference type="KEGG" id="hsa:8674"/>
<dbReference type="MANE-Select" id="ENST00000236192.12">
    <property type="protein sequence ID" value="ENSP00000236192.7"/>
    <property type="RefSeq nucleotide sequence ID" value="NM_003762.5"/>
    <property type="RefSeq protein sequence ID" value="NP_003753.2"/>
</dbReference>
<dbReference type="UCSC" id="uc001ghy.3">
    <molecule id="O75379-1"/>
    <property type="organism name" value="human"/>
</dbReference>
<dbReference type="AGR" id="HGNC:12645"/>
<dbReference type="CTD" id="8674"/>
<dbReference type="DisGeNET" id="8674"/>
<dbReference type="GeneCards" id="VAMP4"/>
<dbReference type="HGNC" id="HGNC:12645">
    <property type="gene designation" value="VAMP4"/>
</dbReference>
<dbReference type="HPA" id="ENSG00000117533">
    <property type="expression patterns" value="Low tissue specificity"/>
</dbReference>
<dbReference type="MIM" id="606909">
    <property type="type" value="gene"/>
</dbReference>
<dbReference type="neXtProt" id="NX_O75379"/>
<dbReference type="OpenTargets" id="ENSG00000117533"/>
<dbReference type="PharmGKB" id="PA37269"/>
<dbReference type="VEuPathDB" id="HostDB:ENSG00000117533"/>
<dbReference type="eggNOG" id="KOG0860">
    <property type="taxonomic scope" value="Eukaryota"/>
</dbReference>
<dbReference type="GeneTree" id="ENSGT00940000155005"/>
<dbReference type="HOGENOM" id="CLU_149550_0_0_1"/>
<dbReference type="InParanoid" id="O75379"/>
<dbReference type="OMA" id="NHDKASN"/>
<dbReference type="OrthoDB" id="190375at2759"/>
<dbReference type="PAN-GO" id="O75379">
    <property type="GO annotations" value="6 GO annotations based on evolutionary models"/>
</dbReference>
<dbReference type="PhylomeDB" id="O75379"/>
<dbReference type="TreeFam" id="TF313666"/>
<dbReference type="PathwayCommons" id="O75379"/>
<dbReference type="Reactome" id="R-HSA-6811440">
    <property type="pathway name" value="Retrograde transport at the Trans-Golgi-Network"/>
</dbReference>
<dbReference type="Reactome" id="R-HSA-8856825">
    <property type="pathway name" value="Cargo recognition for clathrin-mediated endocytosis"/>
</dbReference>
<dbReference type="Reactome" id="R-HSA-8856828">
    <property type="pathway name" value="Clathrin-mediated endocytosis"/>
</dbReference>
<dbReference type="SignaLink" id="O75379"/>
<dbReference type="SIGNOR" id="O75379"/>
<dbReference type="BioGRID-ORCS" id="8674">
    <property type="hits" value="14 hits in 1151 CRISPR screens"/>
</dbReference>
<dbReference type="ChiTaRS" id="VAMP4">
    <property type="organism name" value="human"/>
</dbReference>
<dbReference type="GeneWiki" id="VAMP4"/>
<dbReference type="GenomeRNAi" id="8674"/>
<dbReference type="Pharos" id="O75379">
    <property type="development level" value="Tbio"/>
</dbReference>
<dbReference type="PRO" id="PR:O75379"/>
<dbReference type="Proteomes" id="UP000005640">
    <property type="component" value="Chromosome 1"/>
</dbReference>
<dbReference type="RNAct" id="O75379">
    <property type="molecule type" value="protein"/>
</dbReference>
<dbReference type="Bgee" id="ENSG00000117533">
    <property type="expression patterns" value="Expressed in endothelial cell and 213 other cell types or tissues"/>
</dbReference>
<dbReference type="ExpressionAtlas" id="O75379">
    <property type="expression patterns" value="baseline and differential"/>
</dbReference>
<dbReference type="GO" id="GO:0009986">
    <property type="term" value="C:cell surface"/>
    <property type="evidence" value="ECO:0000314"/>
    <property type="project" value="BHF-UCL"/>
</dbReference>
<dbReference type="GO" id="GO:0030669">
    <property type="term" value="C:clathrin-coated endocytic vesicle membrane"/>
    <property type="evidence" value="ECO:0000304"/>
    <property type="project" value="Reactome"/>
</dbReference>
<dbReference type="GO" id="GO:0005768">
    <property type="term" value="C:endosome"/>
    <property type="evidence" value="ECO:0000304"/>
    <property type="project" value="ProtInc"/>
</dbReference>
<dbReference type="GO" id="GO:0098978">
    <property type="term" value="C:glutamatergic synapse"/>
    <property type="evidence" value="ECO:0007669"/>
    <property type="project" value="Ensembl"/>
</dbReference>
<dbReference type="GO" id="GO:0005794">
    <property type="term" value="C:Golgi apparatus"/>
    <property type="evidence" value="ECO:0000314"/>
    <property type="project" value="UniProtKB"/>
</dbReference>
<dbReference type="GO" id="GO:0000139">
    <property type="term" value="C:Golgi membrane"/>
    <property type="evidence" value="ECO:0000304"/>
    <property type="project" value="ProtInc"/>
</dbReference>
<dbReference type="GO" id="GO:0005764">
    <property type="term" value="C:lysosome"/>
    <property type="evidence" value="ECO:0000304"/>
    <property type="project" value="ProtInc"/>
</dbReference>
<dbReference type="GO" id="GO:0045335">
    <property type="term" value="C:phagocytic vesicle"/>
    <property type="evidence" value="ECO:0007669"/>
    <property type="project" value="Ensembl"/>
</dbReference>
<dbReference type="GO" id="GO:0005886">
    <property type="term" value="C:plasma membrane"/>
    <property type="evidence" value="ECO:0000304"/>
    <property type="project" value="Reactome"/>
</dbReference>
<dbReference type="GO" id="GO:0098954">
    <property type="term" value="C:presynaptic endosome membrane"/>
    <property type="evidence" value="ECO:0007669"/>
    <property type="project" value="Ensembl"/>
</dbReference>
<dbReference type="GO" id="GO:0031201">
    <property type="term" value="C:SNARE complex"/>
    <property type="evidence" value="ECO:0000318"/>
    <property type="project" value="GO_Central"/>
</dbReference>
<dbReference type="GO" id="GO:0005802">
    <property type="term" value="C:trans-Golgi network"/>
    <property type="evidence" value="ECO:0000318"/>
    <property type="project" value="GO_Central"/>
</dbReference>
<dbReference type="GO" id="GO:0032588">
    <property type="term" value="C:trans-Golgi network membrane"/>
    <property type="evidence" value="ECO:0000304"/>
    <property type="project" value="Reactome"/>
</dbReference>
<dbReference type="GO" id="GO:0030133">
    <property type="term" value="C:transport vesicle"/>
    <property type="evidence" value="ECO:0000304"/>
    <property type="project" value="Reactome"/>
</dbReference>
<dbReference type="GO" id="GO:0071346">
    <property type="term" value="P:cellular response to type II interferon"/>
    <property type="evidence" value="ECO:0007669"/>
    <property type="project" value="Ensembl"/>
</dbReference>
<dbReference type="GO" id="GO:0032456">
    <property type="term" value="P:endocytic recycling"/>
    <property type="evidence" value="ECO:0000315"/>
    <property type="project" value="UniProtKB"/>
</dbReference>
<dbReference type="GO" id="GO:0090161">
    <property type="term" value="P:Golgi ribbon formation"/>
    <property type="evidence" value="ECO:0007669"/>
    <property type="project" value="InterPro"/>
</dbReference>
<dbReference type="GO" id="GO:0043001">
    <property type="term" value="P:Golgi to plasma membrane protein transport"/>
    <property type="evidence" value="ECO:0007669"/>
    <property type="project" value="Ensembl"/>
</dbReference>
<dbReference type="GO" id="GO:0098887">
    <property type="term" value="P:neurotransmitter receptor transport, endosome to postsynaptic membrane"/>
    <property type="evidence" value="ECO:0007669"/>
    <property type="project" value="Ensembl"/>
</dbReference>
<dbReference type="GO" id="GO:0042996">
    <property type="term" value="P:regulation of Golgi to plasma membrane protein transport"/>
    <property type="evidence" value="ECO:0007669"/>
    <property type="project" value="Ensembl"/>
</dbReference>
<dbReference type="GO" id="GO:1900242">
    <property type="term" value="P:regulation of synaptic vesicle endocytosis"/>
    <property type="evidence" value="ECO:0007669"/>
    <property type="project" value="Ensembl"/>
</dbReference>
<dbReference type="GO" id="GO:0035493">
    <property type="term" value="P:SNARE complex assembly"/>
    <property type="evidence" value="ECO:0000314"/>
    <property type="project" value="BHF-UCL"/>
</dbReference>
<dbReference type="GO" id="GO:0016189">
    <property type="term" value="P:synaptic vesicle to endosome fusion"/>
    <property type="evidence" value="ECO:0007669"/>
    <property type="project" value="Ensembl"/>
</dbReference>
<dbReference type="GO" id="GO:0099003">
    <property type="term" value="P:vesicle-mediated transport in synapse"/>
    <property type="evidence" value="ECO:0007669"/>
    <property type="project" value="Ensembl"/>
</dbReference>
<dbReference type="CDD" id="cd15869">
    <property type="entry name" value="R-SNARE_VAMP4"/>
    <property type="match status" value="1"/>
</dbReference>
<dbReference type="FunFam" id="1.20.5.110:FF:000050">
    <property type="entry name" value="Vesicle-associated membrane protein 4"/>
    <property type="match status" value="1"/>
</dbReference>
<dbReference type="Gene3D" id="1.20.5.110">
    <property type="match status" value="1"/>
</dbReference>
<dbReference type="InterPro" id="IPR001388">
    <property type="entry name" value="Synaptobrevin-like"/>
</dbReference>
<dbReference type="InterPro" id="IPR042855">
    <property type="entry name" value="V_SNARE_CC"/>
</dbReference>
<dbReference type="InterPro" id="IPR042887">
    <property type="entry name" value="VAMP4"/>
</dbReference>
<dbReference type="PANTHER" id="PTHR46897">
    <property type="entry name" value="VESICLE-ASSOCIATED MEMBRANE PROTEIN 4"/>
    <property type="match status" value="1"/>
</dbReference>
<dbReference type="PANTHER" id="PTHR46897:SF1">
    <property type="entry name" value="VESICLE-ASSOCIATED MEMBRANE PROTEIN 4"/>
    <property type="match status" value="1"/>
</dbReference>
<dbReference type="Pfam" id="PF00957">
    <property type="entry name" value="Synaptobrevin"/>
    <property type="match status" value="1"/>
</dbReference>
<dbReference type="PRINTS" id="PR00219">
    <property type="entry name" value="SYNAPTOBREVN"/>
</dbReference>
<dbReference type="SUPFAM" id="SSF58038">
    <property type="entry name" value="SNARE fusion complex"/>
    <property type="match status" value="1"/>
</dbReference>
<dbReference type="PROSITE" id="PS00417">
    <property type="entry name" value="SYNAPTOBREVIN"/>
    <property type="match status" value="1"/>
</dbReference>
<dbReference type="PROSITE" id="PS50892">
    <property type="entry name" value="V_SNARE"/>
    <property type="match status" value="1"/>
</dbReference>
<reference key="1">
    <citation type="journal article" date="1998" name="J. Biol. Chem.">
        <title>Seven novel mammalian SNARE proteins localize to distinct membrane compartments.</title>
        <authorList>
            <person name="Advani R.J."/>
            <person name="Bae H.-R."/>
            <person name="Bock J.B."/>
            <person name="Chao D.S."/>
            <person name="Doung Y.-C."/>
            <person name="Prekeris R."/>
            <person name="Yoo J.-S."/>
            <person name="Scheller R.H."/>
        </authorList>
    </citation>
    <scope>NUCLEOTIDE SEQUENCE [MRNA] (ISOFORM 1)</scope>
    <source>
        <tissue>B-cell</tissue>
    </source>
</reference>
<reference key="2">
    <citation type="submission" date="1999-01" db="EMBL/GenBank/DDBJ databases">
        <authorList>
            <person name="Rhodes S."/>
        </authorList>
    </citation>
    <scope>NUCLEOTIDE SEQUENCE [LARGE SCALE MRNA] (ISOFORM 1)</scope>
</reference>
<reference key="3">
    <citation type="journal article" date="2006" name="Nature">
        <title>The DNA sequence and biological annotation of human chromosome 1.</title>
        <authorList>
            <person name="Gregory S.G."/>
            <person name="Barlow K.F."/>
            <person name="McLay K.E."/>
            <person name="Kaul R."/>
            <person name="Swarbreck D."/>
            <person name="Dunham A."/>
            <person name="Scott C.E."/>
            <person name="Howe K.L."/>
            <person name="Woodfine K."/>
            <person name="Spencer C.C.A."/>
            <person name="Jones M.C."/>
            <person name="Gillson C."/>
            <person name="Searle S."/>
            <person name="Zhou Y."/>
            <person name="Kokocinski F."/>
            <person name="McDonald L."/>
            <person name="Evans R."/>
            <person name="Phillips K."/>
            <person name="Atkinson A."/>
            <person name="Cooper R."/>
            <person name="Jones C."/>
            <person name="Hall R.E."/>
            <person name="Andrews T.D."/>
            <person name="Lloyd C."/>
            <person name="Ainscough R."/>
            <person name="Almeida J.P."/>
            <person name="Ambrose K.D."/>
            <person name="Anderson F."/>
            <person name="Andrew R.W."/>
            <person name="Ashwell R.I.S."/>
            <person name="Aubin K."/>
            <person name="Babbage A.K."/>
            <person name="Bagguley C.L."/>
            <person name="Bailey J."/>
            <person name="Beasley H."/>
            <person name="Bethel G."/>
            <person name="Bird C.P."/>
            <person name="Bray-Allen S."/>
            <person name="Brown J.Y."/>
            <person name="Brown A.J."/>
            <person name="Buckley D."/>
            <person name="Burton J."/>
            <person name="Bye J."/>
            <person name="Carder C."/>
            <person name="Chapman J.C."/>
            <person name="Clark S.Y."/>
            <person name="Clarke G."/>
            <person name="Clee C."/>
            <person name="Cobley V."/>
            <person name="Collier R.E."/>
            <person name="Corby N."/>
            <person name="Coville G.J."/>
            <person name="Davies J."/>
            <person name="Deadman R."/>
            <person name="Dunn M."/>
            <person name="Earthrowl M."/>
            <person name="Ellington A.G."/>
            <person name="Errington H."/>
            <person name="Frankish A."/>
            <person name="Frankland J."/>
            <person name="French L."/>
            <person name="Garner P."/>
            <person name="Garnett J."/>
            <person name="Gay L."/>
            <person name="Ghori M.R.J."/>
            <person name="Gibson R."/>
            <person name="Gilby L.M."/>
            <person name="Gillett W."/>
            <person name="Glithero R.J."/>
            <person name="Grafham D.V."/>
            <person name="Griffiths C."/>
            <person name="Griffiths-Jones S."/>
            <person name="Grocock R."/>
            <person name="Hammond S."/>
            <person name="Harrison E.S.I."/>
            <person name="Hart E."/>
            <person name="Haugen E."/>
            <person name="Heath P.D."/>
            <person name="Holmes S."/>
            <person name="Holt K."/>
            <person name="Howden P.J."/>
            <person name="Hunt A.R."/>
            <person name="Hunt S.E."/>
            <person name="Hunter G."/>
            <person name="Isherwood J."/>
            <person name="James R."/>
            <person name="Johnson C."/>
            <person name="Johnson D."/>
            <person name="Joy A."/>
            <person name="Kay M."/>
            <person name="Kershaw J.K."/>
            <person name="Kibukawa M."/>
            <person name="Kimberley A.M."/>
            <person name="King A."/>
            <person name="Knights A.J."/>
            <person name="Lad H."/>
            <person name="Laird G."/>
            <person name="Lawlor S."/>
            <person name="Leongamornlert D.A."/>
            <person name="Lloyd D.M."/>
            <person name="Loveland J."/>
            <person name="Lovell J."/>
            <person name="Lush M.J."/>
            <person name="Lyne R."/>
            <person name="Martin S."/>
            <person name="Mashreghi-Mohammadi M."/>
            <person name="Matthews L."/>
            <person name="Matthews N.S.W."/>
            <person name="McLaren S."/>
            <person name="Milne S."/>
            <person name="Mistry S."/>
            <person name="Moore M.J.F."/>
            <person name="Nickerson T."/>
            <person name="O'Dell C.N."/>
            <person name="Oliver K."/>
            <person name="Palmeiri A."/>
            <person name="Palmer S.A."/>
            <person name="Parker A."/>
            <person name="Patel D."/>
            <person name="Pearce A.V."/>
            <person name="Peck A.I."/>
            <person name="Pelan S."/>
            <person name="Phelps K."/>
            <person name="Phillimore B.J."/>
            <person name="Plumb R."/>
            <person name="Rajan J."/>
            <person name="Raymond C."/>
            <person name="Rouse G."/>
            <person name="Saenphimmachak C."/>
            <person name="Sehra H.K."/>
            <person name="Sheridan E."/>
            <person name="Shownkeen R."/>
            <person name="Sims S."/>
            <person name="Skuce C.D."/>
            <person name="Smith M."/>
            <person name="Steward C."/>
            <person name="Subramanian S."/>
            <person name="Sycamore N."/>
            <person name="Tracey A."/>
            <person name="Tromans A."/>
            <person name="Van Helmond Z."/>
            <person name="Wall M."/>
            <person name="Wallis J.M."/>
            <person name="White S."/>
            <person name="Whitehead S.L."/>
            <person name="Wilkinson J.E."/>
            <person name="Willey D.L."/>
            <person name="Williams H."/>
            <person name="Wilming L."/>
            <person name="Wray P.W."/>
            <person name="Wu Z."/>
            <person name="Coulson A."/>
            <person name="Vaudin M."/>
            <person name="Sulston J.E."/>
            <person name="Durbin R.M."/>
            <person name="Hubbard T."/>
            <person name="Wooster R."/>
            <person name="Dunham I."/>
            <person name="Carter N.P."/>
            <person name="McVean G."/>
            <person name="Ross M.T."/>
            <person name="Harrow J."/>
            <person name="Olson M.V."/>
            <person name="Beck S."/>
            <person name="Rogers J."/>
            <person name="Bentley D.R."/>
        </authorList>
    </citation>
    <scope>NUCLEOTIDE SEQUENCE [LARGE SCALE GENOMIC DNA]</scope>
</reference>
<reference key="4">
    <citation type="submission" date="2005-07" db="EMBL/GenBank/DDBJ databases">
        <authorList>
            <person name="Mural R.J."/>
            <person name="Istrail S."/>
            <person name="Sutton G.G."/>
            <person name="Florea L."/>
            <person name="Halpern A.L."/>
            <person name="Mobarry C.M."/>
            <person name="Lippert R."/>
            <person name="Walenz B."/>
            <person name="Shatkay H."/>
            <person name="Dew I."/>
            <person name="Miller J.R."/>
            <person name="Flanigan M.J."/>
            <person name="Edwards N.J."/>
            <person name="Bolanos R."/>
            <person name="Fasulo D."/>
            <person name="Halldorsson B.V."/>
            <person name="Hannenhalli S."/>
            <person name="Turner R."/>
            <person name="Yooseph S."/>
            <person name="Lu F."/>
            <person name="Nusskern D.R."/>
            <person name="Shue B.C."/>
            <person name="Zheng X.H."/>
            <person name="Zhong F."/>
            <person name="Delcher A.L."/>
            <person name="Huson D.H."/>
            <person name="Kravitz S.A."/>
            <person name="Mouchard L."/>
            <person name="Reinert K."/>
            <person name="Remington K.A."/>
            <person name="Clark A.G."/>
            <person name="Waterman M.S."/>
            <person name="Eichler E.E."/>
            <person name="Adams M.D."/>
            <person name="Hunkapiller M.W."/>
            <person name="Myers E.W."/>
            <person name="Venter J.C."/>
        </authorList>
    </citation>
    <scope>NUCLEOTIDE SEQUENCE [LARGE SCALE GENOMIC DNA]</scope>
</reference>
<reference key="5">
    <citation type="journal article" date="2004" name="Genome Res.">
        <title>The status, quality, and expansion of the NIH full-length cDNA project: the Mammalian Gene Collection (MGC).</title>
        <authorList>
            <consortium name="The MGC Project Team"/>
        </authorList>
    </citation>
    <scope>NUCLEOTIDE SEQUENCE [LARGE SCALE MRNA] (ISOFORMS 1 AND 2)</scope>
    <source>
        <tissue>Bone marrow</tissue>
        <tissue>Urinary bladder</tissue>
    </source>
</reference>
<reference key="6">
    <citation type="journal article" date="2006" name="Cell">
        <title>Global, in vivo, and site-specific phosphorylation dynamics in signaling networks.</title>
        <authorList>
            <person name="Olsen J.V."/>
            <person name="Blagoev B."/>
            <person name="Gnad F."/>
            <person name="Macek B."/>
            <person name="Kumar C."/>
            <person name="Mortensen P."/>
            <person name="Mann M."/>
        </authorList>
    </citation>
    <scope>PHOSPHORYLATION [LARGE SCALE ANALYSIS] AT SER-30</scope>
    <scope>IDENTIFICATION BY MASS SPECTROMETRY [LARGE SCALE ANALYSIS]</scope>
    <source>
        <tissue>Cervix carcinoma</tissue>
    </source>
</reference>
<reference key="7">
    <citation type="journal article" date="2008" name="Mol. Cell">
        <title>Kinase-selective enrichment enables quantitative phosphoproteomics of the kinome across the cell cycle.</title>
        <authorList>
            <person name="Daub H."/>
            <person name="Olsen J.V."/>
            <person name="Bairlein M."/>
            <person name="Gnad F."/>
            <person name="Oppermann F.S."/>
            <person name="Korner R."/>
            <person name="Greff Z."/>
            <person name="Keri G."/>
            <person name="Stemmann O."/>
            <person name="Mann M."/>
        </authorList>
    </citation>
    <scope>PHOSPHORYLATION [LARGE SCALE ANALYSIS] AT SER-30</scope>
    <scope>IDENTIFICATION BY MASS SPECTROMETRY [LARGE SCALE ANALYSIS]</scope>
    <source>
        <tissue>Cervix carcinoma</tissue>
    </source>
</reference>
<reference key="8">
    <citation type="journal article" date="2008" name="Proc. Natl. Acad. Sci. U.S.A.">
        <title>A quantitative atlas of mitotic phosphorylation.</title>
        <authorList>
            <person name="Dephoure N."/>
            <person name="Zhou C."/>
            <person name="Villen J."/>
            <person name="Beausoleil S.A."/>
            <person name="Bakalarski C.E."/>
            <person name="Elledge S.J."/>
            <person name="Gygi S.P."/>
        </authorList>
    </citation>
    <scope>IDENTIFICATION BY MASS SPECTROMETRY [LARGE SCALE ANALYSIS]</scope>
    <source>
        <tissue>Cervix carcinoma</tissue>
    </source>
</reference>
<reference key="9">
    <citation type="journal article" date="2008" name="Proteomics">
        <title>Large-scale phosphoproteome analysis of human liver tissue by enrichment and fractionation of phosphopeptides with strong anion exchange chromatography.</title>
        <authorList>
            <person name="Han G."/>
            <person name="Ye M."/>
            <person name="Zhou H."/>
            <person name="Jiang X."/>
            <person name="Feng S."/>
            <person name="Jiang X."/>
            <person name="Tian R."/>
            <person name="Wan D."/>
            <person name="Zou H."/>
            <person name="Gu J."/>
        </authorList>
    </citation>
    <scope>PHOSPHORYLATION [LARGE SCALE ANALYSIS] AT SER-30</scope>
    <scope>IDENTIFICATION BY MASS SPECTROMETRY [LARGE SCALE ANALYSIS]</scope>
    <source>
        <tissue>Liver</tissue>
    </source>
</reference>
<reference key="10">
    <citation type="journal article" date="2009" name="Sci. Signal.">
        <title>Quantitative phosphoproteomic analysis of T cell receptor signaling reveals system-wide modulation of protein-protein interactions.</title>
        <authorList>
            <person name="Mayya V."/>
            <person name="Lundgren D.H."/>
            <person name="Hwang S.-I."/>
            <person name="Rezaul K."/>
            <person name="Wu L."/>
            <person name="Eng J.K."/>
            <person name="Rodionov V."/>
            <person name="Han D.K."/>
        </authorList>
    </citation>
    <scope>PHOSPHORYLATION [LARGE SCALE ANALYSIS] AT SER-30</scope>
    <scope>IDENTIFICATION BY MASS SPECTROMETRY [LARGE SCALE ANALYSIS]</scope>
    <source>
        <tissue>Leukemic T-cell</tissue>
    </source>
</reference>
<reference key="11">
    <citation type="journal article" date="2010" name="Sci. Signal.">
        <title>Quantitative phosphoproteomics reveals widespread full phosphorylation site occupancy during mitosis.</title>
        <authorList>
            <person name="Olsen J.V."/>
            <person name="Vermeulen M."/>
            <person name="Santamaria A."/>
            <person name="Kumar C."/>
            <person name="Miller M.L."/>
            <person name="Jensen L.J."/>
            <person name="Gnad F."/>
            <person name="Cox J."/>
            <person name="Jensen T.S."/>
            <person name="Nigg E.A."/>
            <person name="Brunak S."/>
            <person name="Mann M."/>
        </authorList>
    </citation>
    <scope>PHOSPHORYLATION [LARGE SCALE ANALYSIS] AT SER-30</scope>
    <scope>IDENTIFICATION BY MASS SPECTROMETRY [LARGE SCALE ANALYSIS]</scope>
    <source>
        <tissue>Cervix carcinoma</tissue>
    </source>
</reference>
<reference key="12">
    <citation type="journal article" date="2011" name="BMC Syst. Biol.">
        <title>Initial characterization of the human central proteome.</title>
        <authorList>
            <person name="Burkard T.R."/>
            <person name="Planyavsky M."/>
            <person name="Kaupe I."/>
            <person name="Breitwieser F.P."/>
            <person name="Buerckstuemmer T."/>
            <person name="Bennett K.L."/>
            <person name="Superti-Furga G."/>
            <person name="Colinge J."/>
        </authorList>
    </citation>
    <scope>IDENTIFICATION BY MASS SPECTROMETRY [LARGE SCALE ANALYSIS]</scope>
</reference>
<reference key="13">
    <citation type="journal article" date="2011" name="Sci. Signal.">
        <title>System-wide temporal characterization of the proteome and phosphoproteome of human embryonic stem cell differentiation.</title>
        <authorList>
            <person name="Rigbolt K.T."/>
            <person name="Prokhorova T.A."/>
            <person name="Akimov V."/>
            <person name="Henningsen J."/>
            <person name="Johansen P.T."/>
            <person name="Kratchmarova I."/>
            <person name="Kassem M."/>
            <person name="Mann M."/>
            <person name="Olsen J.V."/>
            <person name="Blagoev B."/>
        </authorList>
    </citation>
    <scope>PHOSPHORYLATION [LARGE SCALE ANALYSIS] AT SER-30</scope>
    <scope>IDENTIFICATION BY MASS SPECTROMETRY [LARGE SCALE ANALYSIS]</scope>
</reference>
<reference key="14">
    <citation type="journal article" date="2013" name="J. Proteome Res.">
        <title>Toward a comprehensive characterization of a human cancer cell phosphoproteome.</title>
        <authorList>
            <person name="Zhou H."/>
            <person name="Di Palma S."/>
            <person name="Preisinger C."/>
            <person name="Peng M."/>
            <person name="Polat A.N."/>
            <person name="Heck A.J."/>
            <person name="Mohammed S."/>
        </authorList>
    </citation>
    <scope>PHOSPHORYLATION [LARGE SCALE ANALYSIS] AT SER-30</scope>
    <scope>IDENTIFICATION BY MASS SPECTROMETRY [LARGE SCALE ANALYSIS]</scope>
    <source>
        <tissue>Cervix carcinoma</tissue>
        <tissue>Erythroleukemia</tissue>
    </source>
</reference>
<reference key="15">
    <citation type="journal article" date="2014" name="J. Proteomics">
        <title>An enzyme assisted RP-RPLC approach for in-depth analysis of human liver phosphoproteome.</title>
        <authorList>
            <person name="Bian Y."/>
            <person name="Song C."/>
            <person name="Cheng K."/>
            <person name="Dong M."/>
            <person name="Wang F."/>
            <person name="Huang J."/>
            <person name="Sun D."/>
            <person name="Wang L."/>
            <person name="Ye M."/>
            <person name="Zou H."/>
        </authorList>
    </citation>
    <scope>PHOSPHORYLATION [LARGE SCALE ANALYSIS] AT SER-30</scope>
    <scope>IDENTIFICATION BY MASS SPECTROMETRY [LARGE SCALE ANALYSIS]</scope>
    <source>
        <tissue>Liver</tissue>
    </source>
</reference>
<reference key="16">
    <citation type="journal article" date="2017" name="J. Cell Biol.">
        <title>BAIAP3, a C2 domain-containing Munc13 protein, controls the fate of dense-core vesicles in neuroendocrine cells.</title>
        <authorList>
            <person name="Zhang X."/>
            <person name="Jiang S."/>
            <person name="Mitok K.A."/>
            <person name="Li L."/>
            <person name="Attie A.D."/>
            <person name="Martin T.F.J."/>
        </authorList>
    </citation>
    <scope>INTERACTION WITH BAIAP3</scope>
</reference>
<proteinExistence type="evidence at protein level"/>
<accession>O75379</accession>
<accession>A2IDD8</accession>
<accession>Q96IY9</accession>
<accession>Q96J20</accession>
<accession>Q9UEL7</accession>
<comment type="function">
    <text>Involved in the pathway that functions to remove an inhibitor (probably synaptotagmin-4) of calcium-triggered exocytosis during the maturation of secretory granules. May be a marker for this sorting pathway that is critical for remodeling the secretory response of granule.</text>
</comment>
<comment type="subunit">
    <text evidence="1 5">Identified in a complex containing STX6, STX12, VAMP4 and VTI1A (By similarity). Interacts with BAIAP3; this interaction is increased in the presence of calcium (PubMed:28626000).</text>
</comment>
<comment type="interaction">
    <interactant intactId="EBI-744953">
        <id>O75379</id>
    </interactant>
    <interactant intactId="EBI-7054139">
        <id>Q68DC2</id>
        <label>ANKS6</label>
    </interactant>
    <organismsDiffer>false</organismsDiffer>
    <experiments>3</experiments>
</comment>
<comment type="interaction">
    <interactant intactId="EBI-744953">
        <id>O75379</id>
    </interactant>
    <interactant intactId="EBI-13059134">
        <id>Q13520</id>
        <label>AQP6</label>
    </interactant>
    <organismsDiffer>false</organismsDiffer>
    <experiments>3</experiments>
</comment>
<comment type="interaction">
    <interactant intactId="EBI-744953">
        <id>O75379</id>
    </interactant>
    <interactant intactId="EBI-11343438">
        <id>Q3SXY8</id>
        <label>ARL13B</label>
    </interactant>
    <organismsDiffer>false</organismsDiffer>
    <experiments>3</experiments>
</comment>
<comment type="interaction">
    <interactant intactId="EBI-744953">
        <id>O75379</id>
    </interactant>
    <interactant intactId="EBI-1045797">
        <id>Q8N5K1</id>
        <label>CISD2</label>
    </interactant>
    <organismsDiffer>false</organismsDiffer>
    <experiments>3</experiments>
</comment>
<comment type="interaction">
    <interactant intactId="EBI-744953">
        <id>O75379</id>
    </interactant>
    <interactant intactId="EBI-18013275">
        <id>Q7Z7G2</id>
        <label>CPLX4</label>
    </interactant>
    <organismsDiffer>false</organismsDiffer>
    <experiments>3</experiments>
</comment>
<comment type="interaction">
    <interactant intactId="EBI-744953">
        <id>O75379</id>
    </interactant>
    <interactant intactId="EBI-1046040">
        <id>P00387</id>
        <label>CYB5R3</label>
    </interactant>
    <organismsDiffer>false</organismsDiffer>
    <experiments>3</experiments>
</comment>
<comment type="interaction">
    <interactant intactId="EBI-744953">
        <id>O75379</id>
    </interactant>
    <interactant intactId="EBI-3915253">
        <id>Q15125</id>
        <label>EBP</label>
    </interactant>
    <organismsDiffer>false</organismsDiffer>
    <experiments>3</experiments>
</comment>
<comment type="interaction">
    <interactant intactId="EBI-744953">
        <id>O75379</id>
    </interactant>
    <interactant intactId="EBI-18535450">
        <id>Q9GZR5</id>
        <label>ELOVL4</label>
    </interactant>
    <organismsDiffer>false</organismsDiffer>
    <experiments>3</experiments>
</comment>
<comment type="interaction">
    <interactant intactId="EBI-744953">
        <id>O75379</id>
    </interactant>
    <interactant intactId="EBI-781551">
        <id>Q9Y282</id>
        <label>ERGIC3</label>
    </interactant>
    <organismsDiffer>false</organismsDiffer>
    <experiments>3</experiments>
</comment>
<comment type="interaction">
    <interactant intactId="EBI-744953">
        <id>O75379</id>
    </interactant>
    <interactant intactId="EBI-17640610">
        <id>P34910-2</id>
        <label>EVI2B</label>
    </interactant>
    <organismsDiffer>false</organismsDiffer>
    <experiments>3</experiments>
</comment>
<comment type="interaction">
    <interactant intactId="EBI-744953">
        <id>O75379</id>
    </interactant>
    <interactant intactId="EBI-18304435">
        <id>Q5JX71</id>
        <label>FAM209A</label>
    </interactant>
    <organismsDiffer>false</organismsDiffer>
    <experiments>3</experiments>
</comment>
<comment type="interaction">
    <interactant intactId="EBI-744953">
        <id>O75379</id>
    </interactant>
    <interactant intactId="EBI-18938272">
        <id>Q96KR6</id>
        <label>FAM210B</label>
    </interactant>
    <organismsDiffer>false</organismsDiffer>
    <experiments>3</experiments>
</comment>
<comment type="interaction">
    <interactant intactId="EBI-744953">
        <id>O75379</id>
    </interactant>
    <interactant intactId="EBI-13345167">
        <id>Q8TDT2</id>
        <label>GPR152</label>
    </interactant>
    <organismsDiffer>false</organismsDiffer>
    <experiments>3</experiments>
</comment>
<comment type="interaction">
    <interactant intactId="EBI-744953">
        <id>O75379</id>
    </interactant>
    <interactant intactId="EBI-11721746">
        <id>Q8TED1</id>
        <label>GPX8</label>
    </interactant>
    <organismsDiffer>false</organismsDiffer>
    <experiments>3</experiments>
</comment>
<comment type="interaction">
    <interactant intactId="EBI-744953">
        <id>O75379</id>
    </interactant>
    <interactant intactId="EBI-749265">
        <id>Q8N6L0</id>
        <label>KASH5</label>
    </interactant>
    <organismsDiffer>false</organismsDiffer>
    <experiments>3</experiments>
</comment>
<comment type="interaction">
    <interactant intactId="EBI-744953">
        <id>O75379</id>
    </interactant>
    <interactant intactId="EBI-10173166">
        <id>Q5T700</id>
        <label>LDLRAD1</label>
    </interactant>
    <organismsDiffer>false</organismsDiffer>
    <experiments>3</experiments>
</comment>
<comment type="interaction">
    <interactant intactId="EBI-744953">
        <id>O75379</id>
    </interactant>
    <interactant intactId="EBI-17490413">
        <id>A8MZ59</id>
        <label>LEUTX</label>
    </interactant>
    <organismsDiffer>false</organismsDiffer>
    <experiments>3</experiments>
</comment>
<comment type="interaction">
    <interactant intactId="EBI-744953">
        <id>O75379</id>
    </interactant>
    <interactant intactId="EBI-11956541">
        <id>Q9GZY8-5</id>
        <label>MFF</label>
    </interactant>
    <organismsDiffer>false</organismsDiffer>
    <experiments>3</experiments>
</comment>
<comment type="interaction">
    <interactant intactId="EBI-744953">
        <id>O75379</id>
    </interactant>
    <interactant intactId="EBI-724754">
        <id>O14880</id>
        <label>MGST3</label>
    </interactant>
    <organismsDiffer>false</organismsDiffer>
    <experiments>3</experiments>
</comment>
<comment type="interaction">
    <interactant intactId="EBI-744953">
        <id>O75379</id>
    </interactant>
    <interactant intactId="EBI-3923617">
        <id>Q9H2K0</id>
        <label>MTIF3</label>
    </interactant>
    <organismsDiffer>false</organismsDiffer>
    <experiments>3</experiments>
</comment>
<comment type="interaction">
    <interactant intactId="EBI-744953">
        <id>O75379</id>
    </interactant>
    <interactant intactId="EBI-11161398">
        <id>O14684</id>
        <label>PTGES</label>
    </interactant>
    <organismsDiffer>false</organismsDiffer>
    <experiments>3</experiments>
</comment>
<comment type="interaction">
    <interactant intactId="EBI-744953">
        <id>O75379</id>
    </interactant>
    <interactant intactId="EBI-7545592">
        <id>Q9H6H4</id>
        <label>REEP4</label>
    </interactant>
    <organismsDiffer>false</organismsDiffer>
    <experiments>3</experiments>
</comment>
<comment type="interaction">
    <interactant intactId="EBI-744953">
        <id>O75379</id>
    </interactant>
    <interactant intactId="EBI-10192441">
        <id>Q86VR2</id>
        <label>RETREG3</label>
    </interactant>
    <organismsDiffer>false</organismsDiffer>
    <experiments>3</experiments>
</comment>
<comment type="interaction">
    <interactant intactId="EBI-744953">
        <id>O75379</id>
    </interactant>
    <interactant intactId="EBI-3920694">
        <id>Q9NR31</id>
        <label>SAR1A</label>
    </interactant>
    <organismsDiffer>false</organismsDiffer>
    <experiments>3</experiments>
</comment>
<comment type="interaction">
    <interactant intactId="EBI-744953">
        <id>O75379</id>
    </interactant>
    <interactant intactId="EBI-2855401">
        <id>Q9BY50</id>
        <label>SEC11C</label>
    </interactant>
    <organismsDiffer>false</organismsDiffer>
    <experiments>3</experiments>
</comment>
<comment type="interaction">
    <interactant intactId="EBI-744953">
        <id>O75379</id>
    </interactant>
    <interactant intactId="EBI-18159983">
        <id>Q3KNW5</id>
        <label>SLC10A6</label>
    </interactant>
    <organismsDiffer>false</organismsDiffer>
    <experiments>3</experiments>
</comment>
<comment type="interaction">
    <interactant intactId="EBI-744953">
        <id>O75379</id>
    </interactant>
    <interactant intactId="EBI-10244848">
        <id>Q5SQN1</id>
        <label>SNAP47</label>
    </interactant>
    <organismsDiffer>false</organismsDiffer>
    <experiments>3</experiments>
</comment>
<comment type="interaction">
    <interactant intactId="EBI-744953">
        <id>O75379</id>
    </interactant>
    <interactant intactId="EBI-17280858">
        <id>Q8WWF3</id>
        <label>SSMEM1</label>
    </interactant>
    <organismsDiffer>false</organismsDiffer>
    <experiments>3</experiments>
</comment>
<comment type="interaction">
    <interactant intactId="EBI-744953">
        <id>O75379</id>
    </interactant>
    <interactant intactId="EBI-1211440">
        <id>P27105</id>
        <label>STOM</label>
    </interactant>
    <organismsDiffer>false</organismsDiffer>
    <experiments>3</experiments>
</comment>
<comment type="interaction">
    <interactant intactId="EBI-744953">
        <id>O75379</id>
    </interactant>
    <interactant intactId="EBI-9089968">
        <id>O14662-5</id>
        <label>STX16</label>
    </interactant>
    <organismsDiffer>false</organismsDiffer>
    <experiments>3</experiments>
</comment>
<comment type="interaction">
    <interactant intactId="EBI-744953">
        <id>O75379</id>
    </interactant>
    <interactant intactId="EBI-712466">
        <id>Q16623</id>
        <label>STX1A</label>
    </interactant>
    <organismsDiffer>false</organismsDiffer>
    <experiments>3</experiments>
</comment>
<comment type="interaction">
    <interactant intactId="EBI-744953">
        <id>O75379</id>
    </interactant>
    <interactant intactId="EBI-744942">
        <id>Q12846</id>
        <label>STX4</label>
    </interactant>
    <organismsDiffer>false</organismsDiffer>
    <experiments>8</experiments>
</comment>
<comment type="interaction">
    <interactant intactId="EBI-744953">
        <id>O75379</id>
    </interactant>
    <interactant intactId="EBI-2695795">
        <id>O43752</id>
        <label>STX6</label>
    </interactant>
    <organismsDiffer>false</organismsDiffer>
    <experiments>4</experiments>
</comment>
<comment type="interaction">
    <interactant intactId="EBI-744953">
        <id>O75379</id>
    </interactant>
    <interactant intactId="EBI-8032987">
        <id>Q8N9I0</id>
        <label>SYT2</label>
    </interactant>
    <organismsDiffer>false</organismsDiffer>
    <experiments>3</experiments>
</comment>
<comment type="interaction">
    <interactant intactId="EBI-744953">
        <id>O75379</id>
    </interactant>
    <interactant intactId="EBI-6448756">
        <id>Q96DZ7</id>
        <label>TM4SF19</label>
    </interactant>
    <organismsDiffer>false</organismsDiffer>
    <experiments>3</experiments>
</comment>
<comment type="interaction">
    <interactant intactId="EBI-744953">
        <id>O75379</id>
    </interactant>
    <interactant intactId="EBI-6269551">
        <id>Q6UW68</id>
        <label>TMEM205</label>
    </interactant>
    <organismsDiffer>false</organismsDiffer>
    <experiments>3</experiments>
</comment>
<comment type="interaction">
    <interactant intactId="EBI-744953">
        <id>O75379</id>
    </interactant>
    <interactant intactId="EBI-726044">
        <id>Q9NW97</id>
        <label>TMEM51</label>
    </interactant>
    <organismsDiffer>false</organismsDiffer>
    <experiments>3</experiments>
</comment>
<comment type="interaction">
    <interactant intactId="EBI-744953">
        <id>O75379</id>
    </interactant>
    <interactant intactId="EBI-6447886">
        <id>Q9Y320</id>
        <label>TMX2</label>
    </interactant>
    <organismsDiffer>false</organismsDiffer>
    <experiments>3</experiments>
</comment>
<comment type="interaction">
    <interactant intactId="EBI-10187996">
        <id>O75379-2</id>
    </interactant>
    <interactant intactId="EBI-747430">
        <id>Q9BXK5</id>
        <label>BCL2L13</label>
    </interactant>
    <organismsDiffer>false</organismsDiffer>
    <experiments>3</experiments>
</comment>
<comment type="interaction">
    <interactant intactId="EBI-10187996">
        <id>O75379-2</id>
    </interactant>
    <interactant intactId="EBI-1955541">
        <id>Q53GS7</id>
        <label>GLE1</label>
    </interactant>
    <organismsDiffer>false</organismsDiffer>
    <experiments>3</experiments>
</comment>
<comment type="interaction">
    <interactant intactId="EBI-10187996">
        <id>O75379-2</id>
    </interactant>
    <interactant intactId="EBI-749265">
        <id>Q8N6L0</id>
        <label>KASH5</label>
    </interactant>
    <organismsDiffer>false</organismsDiffer>
    <experiments>3</experiments>
</comment>
<comment type="interaction">
    <interactant intactId="EBI-10187996">
        <id>O75379-2</id>
    </interactant>
    <interactant intactId="EBI-490676">
        <id>O95721</id>
        <label>SNAP29</label>
    </interactant>
    <organismsDiffer>false</organismsDiffer>
    <experiments>3</experiments>
</comment>
<comment type="interaction">
    <interactant intactId="EBI-10187996">
        <id>O75379-2</id>
    </interactant>
    <interactant intactId="EBI-5235340">
        <id>Q7Z699</id>
        <label>SPRED1</label>
    </interactant>
    <organismsDiffer>false</organismsDiffer>
    <experiments>3</experiments>
</comment>
<comment type="interaction">
    <interactant intactId="EBI-10187996">
        <id>O75379-2</id>
    </interactant>
    <interactant intactId="EBI-744942">
        <id>Q12846</id>
        <label>STX4</label>
    </interactant>
    <organismsDiffer>false</organismsDiffer>
    <experiments>4</experiments>
</comment>
<comment type="subcellular location">
    <subcellularLocation>
        <location evidence="7">Golgi apparatus</location>
        <location evidence="7">trans-Golgi network membrane</location>
        <topology evidence="7">Single-pass type IV membrane protein</topology>
    </subcellularLocation>
    <text>Associated with trans Golgi network (TGN) and newly formed immature secretory granules (ISG). Not found on the mature secretory organelles.</text>
</comment>
<comment type="alternative products">
    <event type="alternative splicing"/>
    <isoform>
        <id>O75379-1</id>
        <name>1</name>
        <sequence type="displayed"/>
    </isoform>
    <isoform>
        <id>O75379-2</id>
        <name>2</name>
        <sequence type="described" ref="VSP_006326"/>
    </isoform>
</comment>
<comment type="similarity">
    <text evidence="7">Belongs to the synaptobrevin family.</text>
</comment>
<name>VAMP4_HUMAN</name>
<organism>
    <name type="scientific">Homo sapiens</name>
    <name type="common">Human</name>
    <dbReference type="NCBI Taxonomy" id="9606"/>
    <lineage>
        <taxon>Eukaryota</taxon>
        <taxon>Metazoa</taxon>
        <taxon>Chordata</taxon>
        <taxon>Craniata</taxon>
        <taxon>Vertebrata</taxon>
        <taxon>Euteleostomi</taxon>
        <taxon>Mammalia</taxon>
        <taxon>Eutheria</taxon>
        <taxon>Euarchontoglires</taxon>
        <taxon>Primates</taxon>
        <taxon>Haplorrhini</taxon>
        <taxon>Catarrhini</taxon>
        <taxon>Hominidae</taxon>
        <taxon>Homo</taxon>
    </lineage>
</organism>
<feature type="chain" id="PRO_0000206731" description="Vesicle-associated membrane protein 4">
    <location>
        <begin position="1"/>
        <end position="141"/>
    </location>
</feature>
<feature type="topological domain" description="Cytoplasmic" evidence="2">
    <location>
        <begin position="1"/>
        <end position="115"/>
    </location>
</feature>
<feature type="transmembrane region" description="Helical; Anchor for type IV membrane protein" evidence="2">
    <location>
        <begin position="116"/>
        <end position="136"/>
    </location>
</feature>
<feature type="topological domain" description="Vesicular" evidence="2">
    <location>
        <begin position="137"/>
        <end position="141"/>
    </location>
</feature>
<feature type="domain" description="v-SNARE coiled-coil homology" evidence="3">
    <location>
        <begin position="52"/>
        <end position="112"/>
    </location>
</feature>
<feature type="region of interest" description="Disordered" evidence="4">
    <location>
        <begin position="1"/>
        <end position="51"/>
    </location>
</feature>
<feature type="modified residue" description="Phosphoserine" evidence="1">
    <location>
        <position position="17"/>
    </location>
</feature>
<feature type="modified residue" description="Phosphoserine" evidence="8 9 10 11 12 13 14 15">
    <location>
        <position position="30"/>
    </location>
</feature>
<feature type="splice variant" id="VSP_006326" description="In isoform 2." evidence="6">
    <location>
        <position position="39"/>
    </location>
</feature>
<feature type="sequence conflict" description="In Ref. 1; AAC24032." evidence="7" ref="1">
    <original>Q</original>
    <variation>P</variation>
    <location>
        <position position="68"/>
    </location>
</feature>
<sequence length="141" mass="16397">MPPKFKRHLNDDDVTGSVKSERRNLLEDDSDEEEDFFLRGPSGPRFGPRNDKIKHVQNQVDEVIDVMQENITKVIERGERLDELQDKSESLSDNATAFSNRSKQLRRQMWWRGCKIKAIMALVAAILLLVIIILIVMKYRT</sequence>